<keyword id="KW-0028">Amino-acid biosynthesis</keyword>
<keyword id="KW-0055">Arginine biosynthesis</keyword>
<keyword id="KW-0067">ATP-binding</keyword>
<keyword id="KW-0315">Glutamine amidotransferase</keyword>
<keyword id="KW-0436">Ligase</keyword>
<keyword id="KW-0547">Nucleotide-binding</keyword>
<keyword id="KW-0665">Pyrimidine biosynthesis</keyword>
<keyword id="KW-1185">Reference proteome</keyword>
<gene>
    <name evidence="1" type="primary">carA</name>
    <name type="ordered locus">SAV_6866</name>
</gene>
<feature type="chain" id="PRO_0000112327" description="Carbamoyl phosphate synthase small chain">
    <location>
        <begin position="1"/>
        <end position="380"/>
    </location>
</feature>
<feature type="domain" description="Glutamine amidotransferase type-1" evidence="1">
    <location>
        <begin position="188"/>
        <end position="380"/>
    </location>
</feature>
<feature type="region of interest" description="CPSase" evidence="1">
    <location>
        <begin position="1"/>
        <end position="187"/>
    </location>
</feature>
<feature type="active site" description="Nucleophile" evidence="1">
    <location>
        <position position="264"/>
    </location>
</feature>
<feature type="active site" evidence="1">
    <location>
        <position position="354"/>
    </location>
</feature>
<feature type="active site" evidence="1">
    <location>
        <position position="356"/>
    </location>
</feature>
<feature type="binding site" evidence="1">
    <location>
        <position position="55"/>
    </location>
    <ligand>
        <name>L-glutamine</name>
        <dbReference type="ChEBI" id="CHEBI:58359"/>
    </ligand>
</feature>
<feature type="binding site" evidence="1">
    <location>
        <position position="236"/>
    </location>
    <ligand>
        <name>L-glutamine</name>
        <dbReference type="ChEBI" id="CHEBI:58359"/>
    </ligand>
</feature>
<feature type="binding site" evidence="1">
    <location>
        <position position="238"/>
    </location>
    <ligand>
        <name>L-glutamine</name>
        <dbReference type="ChEBI" id="CHEBI:58359"/>
    </ligand>
</feature>
<feature type="binding site" evidence="1">
    <location>
        <position position="265"/>
    </location>
    <ligand>
        <name>L-glutamine</name>
        <dbReference type="ChEBI" id="CHEBI:58359"/>
    </ligand>
</feature>
<feature type="binding site" evidence="1">
    <location>
        <position position="268"/>
    </location>
    <ligand>
        <name>L-glutamine</name>
        <dbReference type="ChEBI" id="CHEBI:58359"/>
    </ligand>
</feature>
<feature type="binding site" evidence="1">
    <location>
        <position position="306"/>
    </location>
    <ligand>
        <name>L-glutamine</name>
        <dbReference type="ChEBI" id="CHEBI:58359"/>
    </ligand>
</feature>
<feature type="binding site" evidence="1">
    <location>
        <position position="308"/>
    </location>
    <ligand>
        <name>L-glutamine</name>
        <dbReference type="ChEBI" id="CHEBI:58359"/>
    </ligand>
</feature>
<feature type="binding site" evidence="1">
    <location>
        <position position="309"/>
    </location>
    <ligand>
        <name>L-glutamine</name>
        <dbReference type="ChEBI" id="CHEBI:58359"/>
    </ligand>
</feature>
<name>CARA_STRAW</name>
<sequence length="380" mass="40839">MTTSTRGAAKVPAVLVLEDGRTFRGRAYGAVGVTFGEAVFSTGMTGYQETLTDPSYHRQVVVMTAPHVGNTGVNDEDPESKRIWVSGYVVRDPARVPSNWRSRRSLDEELRHQGVVGISGIDTRALTRHLRESGAMRVGIFSGSALPDEGTMLAEVRQAPEMKGANLAAEVATKETYVVPAIGAKRFTVAAVDLGIKGMTPHRMAERGIEVHVLPATATAEDVYAVNPDGVFFSNGPGDPATADGPVAVMREVLARKTPLFGICFGNQILGRALGFGTYKLKYGHRGINQPVQDRTTGKVEVTAHNHGFAVDAPLDQVSDTPYGRAEVSHVCLNDNVVEGLQLLDQPAFSVQYHPEAAAGPHDAAYLFDRFVSLMEGQRA</sequence>
<dbReference type="EC" id="6.3.5.5" evidence="1"/>
<dbReference type="EMBL" id="BA000030">
    <property type="protein sequence ID" value="BAC74577.1"/>
    <property type="molecule type" value="Genomic_DNA"/>
</dbReference>
<dbReference type="RefSeq" id="WP_010988264.1">
    <property type="nucleotide sequence ID" value="NZ_JZJK01000082.1"/>
</dbReference>
<dbReference type="SMR" id="Q827Q8"/>
<dbReference type="GeneID" id="41543941"/>
<dbReference type="KEGG" id="sma:SAVERM_6866"/>
<dbReference type="eggNOG" id="COG0505">
    <property type="taxonomic scope" value="Bacteria"/>
</dbReference>
<dbReference type="HOGENOM" id="CLU_035901_2_1_11"/>
<dbReference type="OrthoDB" id="9804328at2"/>
<dbReference type="UniPathway" id="UPA00068">
    <property type="reaction ID" value="UER00171"/>
</dbReference>
<dbReference type="UniPathway" id="UPA00070">
    <property type="reaction ID" value="UER00115"/>
</dbReference>
<dbReference type="Proteomes" id="UP000000428">
    <property type="component" value="Chromosome"/>
</dbReference>
<dbReference type="GO" id="GO:0005524">
    <property type="term" value="F:ATP binding"/>
    <property type="evidence" value="ECO:0007669"/>
    <property type="project" value="UniProtKB-UniRule"/>
</dbReference>
<dbReference type="GO" id="GO:0004088">
    <property type="term" value="F:carbamoyl-phosphate synthase (glutamine-hydrolyzing) activity"/>
    <property type="evidence" value="ECO:0007669"/>
    <property type="project" value="UniProtKB-UniRule"/>
</dbReference>
<dbReference type="GO" id="GO:0004359">
    <property type="term" value="F:glutaminase activity"/>
    <property type="evidence" value="ECO:0007669"/>
    <property type="project" value="RHEA"/>
</dbReference>
<dbReference type="GO" id="GO:0006207">
    <property type="term" value="P:'de novo' pyrimidine nucleobase biosynthetic process"/>
    <property type="evidence" value="ECO:0007669"/>
    <property type="project" value="InterPro"/>
</dbReference>
<dbReference type="GO" id="GO:0044205">
    <property type="term" value="P:'de novo' UMP biosynthetic process"/>
    <property type="evidence" value="ECO:0007669"/>
    <property type="project" value="UniProtKB-UniRule"/>
</dbReference>
<dbReference type="GO" id="GO:0006541">
    <property type="term" value="P:glutamine metabolic process"/>
    <property type="evidence" value="ECO:0007669"/>
    <property type="project" value="InterPro"/>
</dbReference>
<dbReference type="GO" id="GO:0006526">
    <property type="term" value="P:L-arginine biosynthetic process"/>
    <property type="evidence" value="ECO:0007669"/>
    <property type="project" value="UniProtKB-UniRule"/>
</dbReference>
<dbReference type="CDD" id="cd01744">
    <property type="entry name" value="GATase1_CPSase"/>
    <property type="match status" value="1"/>
</dbReference>
<dbReference type="FunFam" id="3.40.50.880:FF:000018">
    <property type="entry name" value="Carbamoyl-phosphate synthase small chain"/>
    <property type="match status" value="1"/>
</dbReference>
<dbReference type="FunFam" id="3.50.30.20:FF:000001">
    <property type="entry name" value="Carbamoyl-phosphate synthase small chain"/>
    <property type="match status" value="1"/>
</dbReference>
<dbReference type="Gene3D" id="3.40.50.880">
    <property type="match status" value="1"/>
</dbReference>
<dbReference type="Gene3D" id="3.50.30.20">
    <property type="entry name" value="Carbamoyl-phosphate synthase small subunit, N-terminal domain"/>
    <property type="match status" value="1"/>
</dbReference>
<dbReference type="HAMAP" id="MF_01209">
    <property type="entry name" value="CPSase_S_chain"/>
    <property type="match status" value="1"/>
</dbReference>
<dbReference type="InterPro" id="IPR050472">
    <property type="entry name" value="Anth_synth/Amidotransfase"/>
</dbReference>
<dbReference type="InterPro" id="IPR006274">
    <property type="entry name" value="CarbamoylP_synth_ssu"/>
</dbReference>
<dbReference type="InterPro" id="IPR002474">
    <property type="entry name" value="CarbamoylP_synth_ssu_N"/>
</dbReference>
<dbReference type="InterPro" id="IPR036480">
    <property type="entry name" value="CarbP_synth_ssu_N_sf"/>
</dbReference>
<dbReference type="InterPro" id="IPR029062">
    <property type="entry name" value="Class_I_gatase-like"/>
</dbReference>
<dbReference type="InterPro" id="IPR035686">
    <property type="entry name" value="CPSase_GATase1"/>
</dbReference>
<dbReference type="InterPro" id="IPR017926">
    <property type="entry name" value="GATASE"/>
</dbReference>
<dbReference type="NCBIfam" id="TIGR01368">
    <property type="entry name" value="CPSaseIIsmall"/>
    <property type="match status" value="1"/>
</dbReference>
<dbReference type="NCBIfam" id="NF009475">
    <property type="entry name" value="PRK12838.1"/>
    <property type="match status" value="1"/>
</dbReference>
<dbReference type="PANTHER" id="PTHR43418:SF7">
    <property type="entry name" value="CARBAMOYL-PHOSPHATE SYNTHASE SMALL CHAIN"/>
    <property type="match status" value="1"/>
</dbReference>
<dbReference type="PANTHER" id="PTHR43418">
    <property type="entry name" value="MULTIFUNCTIONAL TRYPTOPHAN BIOSYNTHESIS PROTEIN-RELATED"/>
    <property type="match status" value="1"/>
</dbReference>
<dbReference type="Pfam" id="PF00988">
    <property type="entry name" value="CPSase_sm_chain"/>
    <property type="match status" value="1"/>
</dbReference>
<dbReference type="Pfam" id="PF00117">
    <property type="entry name" value="GATase"/>
    <property type="match status" value="1"/>
</dbReference>
<dbReference type="PRINTS" id="PR00097">
    <property type="entry name" value="ANTSNTHASEII"/>
</dbReference>
<dbReference type="PRINTS" id="PR00099">
    <property type="entry name" value="CPSGATASE"/>
</dbReference>
<dbReference type="PRINTS" id="PR00096">
    <property type="entry name" value="GATASE"/>
</dbReference>
<dbReference type="SMART" id="SM01097">
    <property type="entry name" value="CPSase_sm_chain"/>
    <property type="match status" value="1"/>
</dbReference>
<dbReference type="SUPFAM" id="SSF52021">
    <property type="entry name" value="Carbamoyl phosphate synthetase, small subunit N-terminal domain"/>
    <property type="match status" value="1"/>
</dbReference>
<dbReference type="SUPFAM" id="SSF52317">
    <property type="entry name" value="Class I glutamine amidotransferase-like"/>
    <property type="match status" value="1"/>
</dbReference>
<dbReference type="PROSITE" id="PS51273">
    <property type="entry name" value="GATASE_TYPE_1"/>
    <property type="match status" value="1"/>
</dbReference>
<comment type="function">
    <text evidence="1">Small subunit of the glutamine-dependent carbamoyl phosphate synthetase (CPSase). CPSase catalyzes the formation of carbamoyl phosphate from the ammonia moiety of glutamine, carbonate, and phosphate donated by ATP, constituting the first step of 2 biosynthetic pathways, one leading to arginine and/or urea and the other to pyrimidine nucleotides. The small subunit (glutamine amidotransferase) binds and cleaves glutamine to supply the large subunit with the substrate ammonia.</text>
</comment>
<comment type="catalytic activity">
    <reaction evidence="1">
        <text>hydrogencarbonate + L-glutamine + 2 ATP + H2O = carbamoyl phosphate + L-glutamate + 2 ADP + phosphate + 2 H(+)</text>
        <dbReference type="Rhea" id="RHEA:18633"/>
        <dbReference type="ChEBI" id="CHEBI:15377"/>
        <dbReference type="ChEBI" id="CHEBI:15378"/>
        <dbReference type="ChEBI" id="CHEBI:17544"/>
        <dbReference type="ChEBI" id="CHEBI:29985"/>
        <dbReference type="ChEBI" id="CHEBI:30616"/>
        <dbReference type="ChEBI" id="CHEBI:43474"/>
        <dbReference type="ChEBI" id="CHEBI:58228"/>
        <dbReference type="ChEBI" id="CHEBI:58359"/>
        <dbReference type="ChEBI" id="CHEBI:456216"/>
        <dbReference type="EC" id="6.3.5.5"/>
    </reaction>
</comment>
<comment type="catalytic activity">
    <molecule>Carbamoyl phosphate synthase small chain</molecule>
    <reaction evidence="1">
        <text>L-glutamine + H2O = L-glutamate + NH4(+)</text>
        <dbReference type="Rhea" id="RHEA:15889"/>
        <dbReference type="ChEBI" id="CHEBI:15377"/>
        <dbReference type="ChEBI" id="CHEBI:28938"/>
        <dbReference type="ChEBI" id="CHEBI:29985"/>
        <dbReference type="ChEBI" id="CHEBI:58359"/>
    </reaction>
</comment>
<comment type="pathway">
    <text evidence="1">Amino-acid biosynthesis; L-arginine biosynthesis; carbamoyl phosphate from bicarbonate: step 1/1.</text>
</comment>
<comment type="pathway">
    <text evidence="1">Pyrimidine metabolism; UMP biosynthesis via de novo pathway; (S)-dihydroorotate from bicarbonate: step 1/3.</text>
</comment>
<comment type="subunit">
    <text evidence="1">Composed of two chains; the small (or glutamine) chain promotes the hydrolysis of glutamine to ammonia, which is used by the large (or ammonia) chain to synthesize carbamoyl phosphate. Tetramer of heterodimers (alpha,beta)4.</text>
</comment>
<comment type="similarity">
    <text evidence="1">Belongs to the CarA family.</text>
</comment>
<reference key="1">
    <citation type="journal article" date="2001" name="Proc. Natl. Acad. Sci. U.S.A.">
        <title>Genome sequence of an industrial microorganism Streptomyces avermitilis: deducing the ability of producing secondary metabolites.</title>
        <authorList>
            <person name="Omura S."/>
            <person name="Ikeda H."/>
            <person name="Ishikawa J."/>
            <person name="Hanamoto A."/>
            <person name="Takahashi C."/>
            <person name="Shinose M."/>
            <person name="Takahashi Y."/>
            <person name="Horikawa H."/>
            <person name="Nakazawa H."/>
            <person name="Osonoe T."/>
            <person name="Kikuchi H."/>
            <person name="Shiba T."/>
            <person name="Sakaki Y."/>
            <person name="Hattori M."/>
        </authorList>
    </citation>
    <scope>NUCLEOTIDE SEQUENCE [LARGE SCALE GENOMIC DNA]</scope>
    <source>
        <strain>ATCC 31267 / DSM 46492 / JCM 5070 / NBRC 14893 / NCIMB 12804 / NRRL 8165 / MA-4680</strain>
    </source>
</reference>
<reference key="2">
    <citation type="journal article" date="2003" name="Nat. Biotechnol.">
        <title>Complete genome sequence and comparative analysis of the industrial microorganism Streptomyces avermitilis.</title>
        <authorList>
            <person name="Ikeda H."/>
            <person name="Ishikawa J."/>
            <person name="Hanamoto A."/>
            <person name="Shinose M."/>
            <person name="Kikuchi H."/>
            <person name="Shiba T."/>
            <person name="Sakaki Y."/>
            <person name="Hattori M."/>
            <person name="Omura S."/>
        </authorList>
    </citation>
    <scope>NUCLEOTIDE SEQUENCE [LARGE SCALE GENOMIC DNA]</scope>
    <source>
        <strain>ATCC 31267 / DSM 46492 / JCM 5070 / NBRC 14893 / NCIMB 12804 / NRRL 8165 / MA-4680</strain>
    </source>
</reference>
<accession>Q827Q8</accession>
<organism>
    <name type="scientific">Streptomyces avermitilis (strain ATCC 31267 / DSM 46492 / JCM 5070 / NBRC 14893 / NCIMB 12804 / NRRL 8165 / MA-4680)</name>
    <dbReference type="NCBI Taxonomy" id="227882"/>
    <lineage>
        <taxon>Bacteria</taxon>
        <taxon>Bacillati</taxon>
        <taxon>Actinomycetota</taxon>
        <taxon>Actinomycetes</taxon>
        <taxon>Kitasatosporales</taxon>
        <taxon>Streptomycetaceae</taxon>
        <taxon>Streptomyces</taxon>
    </lineage>
</organism>
<evidence type="ECO:0000255" key="1">
    <source>
        <dbReference type="HAMAP-Rule" id="MF_01209"/>
    </source>
</evidence>
<proteinExistence type="inferred from homology"/>
<protein>
    <recommendedName>
        <fullName evidence="1">Carbamoyl phosphate synthase small chain</fullName>
        <ecNumber evidence="1">6.3.5.5</ecNumber>
    </recommendedName>
    <alternativeName>
        <fullName evidence="1">Carbamoyl phosphate synthetase glutamine chain</fullName>
    </alternativeName>
</protein>